<gene>
    <name type="primary">MGP</name>
</gene>
<proteinExistence type="inferred from homology"/>
<feature type="signal peptide" evidence="1">
    <location>
        <begin position="1"/>
        <end position="19"/>
    </location>
</feature>
<feature type="chain" id="PRO_0000011113" description="Matrix Gla protein">
    <location>
        <begin position="20"/>
        <end position="96"/>
    </location>
</feature>
<feature type="propeptide" id="PRO_0000011114" description="Removed in mature form; probably by carboxypeptidase N">
    <location>
        <begin position="97"/>
        <end position="103"/>
    </location>
</feature>
<feature type="domain" description="Gla" evidence="3">
    <location>
        <begin position="51"/>
        <end position="97"/>
    </location>
</feature>
<feature type="modified residue" description="4-carboxyglutamate" evidence="2 3">
    <location>
        <position position="21"/>
    </location>
</feature>
<feature type="modified residue" description="Phosphoserine" evidence="2">
    <location>
        <position position="22"/>
    </location>
</feature>
<feature type="modified residue" description="Phosphoserine" evidence="2">
    <location>
        <position position="25"/>
    </location>
</feature>
<feature type="modified residue" description="Phosphoserine" evidence="2">
    <location>
        <position position="28"/>
    </location>
</feature>
<feature type="modified residue" description="4-carboxyglutamate" evidence="2 3">
    <location>
        <position position="56"/>
    </location>
</feature>
<feature type="modified residue" description="4-carboxyglutamate" evidence="2 3">
    <location>
        <position position="60"/>
    </location>
</feature>
<feature type="modified residue" description="4-carboxyglutamate" evidence="2 3">
    <location>
        <position position="67"/>
    </location>
</feature>
<feature type="modified residue" description="4-carboxyglutamate" evidence="2 3">
    <location>
        <position position="71"/>
    </location>
</feature>
<feature type="disulfide bond" evidence="3">
    <location>
        <begin position="73"/>
        <end position="79"/>
    </location>
</feature>
<dbReference type="EMBL" id="CR857858">
    <property type="protein sequence ID" value="CAH90111.1"/>
    <property type="molecule type" value="mRNA"/>
</dbReference>
<dbReference type="RefSeq" id="NP_001125014.1">
    <property type="nucleotide sequence ID" value="NM_001131542.1"/>
</dbReference>
<dbReference type="SMR" id="Q5RDP6"/>
<dbReference type="FunCoup" id="Q5RDP6">
    <property type="interactions" value="66"/>
</dbReference>
<dbReference type="GeneID" id="100171893"/>
<dbReference type="KEGG" id="pon:100171893"/>
<dbReference type="CTD" id="4256"/>
<dbReference type="InParanoid" id="Q5RDP6"/>
<dbReference type="OrthoDB" id="8958520at2759"/>
<dbReference type="Proteomes" id="UP000001595">
    <property type="component" value="Unplaced"/>
</dbReference>
<dbReference type="GO" id="GO:0031012">
    <property type="term" value="C:extracellular matrix"/>
    <property type="evidence" value="ECO:0007669"/>
    <property type="project" value="InterPro"/>
</dbReference>
<dbReference type="GO" id="GO:0005576">
    <property type="term" value="C:extracellular region"/>
    <property type="evidence" value="ECO:0007669"/>
    <property type="project" value="UniProtKB-SubCell"/>
</dbReference>
<dbReference type="GO" id="GO:0005509">
    <property type="term" value="F:calcium ion binding"/>
    <property type="evidence" value="ECO:0007669"/>
    <property type="project" value="InterPro"/>
</dbReference>
<dbReference type="GO" id="GO:0051216">
    <property type="term" value="P:cartilage development"/>
    <property type="evidence" value="ECO:0007669"/>
    <property type="project" value="UniProtKB-KW"/>
</dbReference>
<dbReference type="GO" id="GO:0030154">
    <property type="term" value="P:cell differentiation"/>
    <property type="evidence" value="ECO:0007669"/>
    <property type="project" value="UniProtKB-KW"/>
</dbReference>
<dbReference type="GO" id="GO:0001503">
    <property type="term" value="P:ossification"/>
    <property type="evidence" value="ECO:0007669"/>
    <property type="project" value="UniProtKB-KW"/>
</dbReference>
<dbReference type="GO" id="GO:0030500">
    <property type="term" value="P:regulation of bone mineralization"/>
    <property type="evidence" value="ECO:0007669"/>
    <property type="project" value="InterPro"/>
</dbReference>
<dbReference type="InterPro" id="IPR035972">
    <property type="entry name" value="GLA-like_dom_SF"/>
</dbReference>
<dbReference type="InterPro" id="IPR000294">
    <property type="entry name" value="GLA_domain"/>
</dbReference>
<dbReference type="InterPro" id="IPR027118">
    <property type="entry name" value="MGP"/>
</dbReference>
<dbReference type="InterPro" id="IPR002384">
    <property type="entry name" value="Osteocalcin/MGP"/>
</dbReference>
<dbReference type="PANTHER" id="PTHR10109">
    <property type="entry name" value="MATRIX GLA PROTEIN"/>
    <property type="match status" value="1"/>
</dbReference>
<dbReference type="PANTHER" id="PTHR10109:SF0">
    <property type="entry name" value="MATRIX GLA PROTEIN"/>
    <property type="match status" value="1"/>
</dbReference>
<dbReference type="PRINTS" id="PR00002">
    <property type="entry name" value="GLABONE"/>
</dbReference>
<dbReference type="SMART" id="SM00069">
    <property type="entry name" value="GLA"/>
    <property type="match status" value="1"/>
</dbReference>
<dbReference type="SUPFAM" id="SSF57630">
    <property type="entry name" value="GLA-domain"/>
    <property type="match status" value="1"/>
</dbReference>
<dbReference type="PROSITE" id="PS00011">
    <property type="entry name" value="GLA_1"/>
    <property type="match status" value="1"/>
</dbReference>
<dbReference type="PROSITE" id="PS50998">
    <property type="entry name" value="GLA_2"/>
    <property type="match status" value="1"/>
</dbReference>
<evidence type="ECO:0000250" key="1"/>
<evidence type="ECO:0000250" key="2">
    <source>
        <dbReference type="UniProtKB" id="P07507"/>
    </source>
</evidence>
<evidence type="ECO:0000255" key="3">
    <source>
        <dbReference type="PROSITE-ProRule" id="PRU00463"/>
    </source>
</evidence>
<evidence type="ECO:0000305" key="4"/>
<keyword id="KW-0891">Chondrogenesis</keyword>
<keyword id="KW-0217">Developmental protein</keyword>
<keyword id="KW-0221">Differentiation</keyword>
<keyword id="KW-1015">Disulfide bond</keyword>
<keyword id="KW-0301">Gamma-carboxyglutamic acid</keyword>
<keyword id="KW-0892">Osteogenesis</keyword>
<keyword id="KW-0597">Phosphoprotein</keyword>
<keyword id="KW-1185">Reference proteome</keyword>
<keyword id="KW-0964">Secreted</keyword>
<keyword id="KW-0732">Signal</keyword>
<accession>Q5RDP6</accession>
<sequence>MKSLVLLAILAALAVVTLCYESHESMESYELNPFINRRNANIFISPQQRWRAKVQERIRERSKPVHELNREACDDYRLCERYAMVYGYNAAYNRYFRERRGAK</sequence>
<reference key="1">
    <citation type="submission" date="2004-11" db="EMBL/GenBank/DDBJ databases">
        <authorList>
            <consortium name="The German cDNA consortium"/>
        </authorList>
    </citation>
    <scope>NUCLEOTIDE SEQUENCE [LARGE SCALE MRNA]</scope>
    <source>
        <tissue>Heart</tissue>
    </source>
</reference>
<name>MGP_PONAB</name>
<protein>
    <recommendedName>
        <fullName>Matrix Gla protein</fullName>
        <shortName>MGP</shortName>
    </recommendedName>
</protein>
<organism>
    <name type="scientific">Pongo abelii</name>
    <name type="common">Sumatran orangutan</name>
    <name type="synonym">Pongo pygmaeus abelii</name>
    <dbReference type="NCBI Taxonomy" id="9601"/>
    <lineage>
        <taxon>Eukaryota</taxon>
        <taxon>Metazoa</taxon>
        <taxon>Chordata</taxon>
        <taxon>Craniata</taxon>
        <taxon>Vertebrata</taxon>
        <taxon>Euteleostomi</taxon>
        <taxon>Mammalia</taxon>
        <taxon>Eutheria</taxon>
        <taxon>Euarchontoglires</taxon>
        <taxon>Primates</taxon>
        <taxon>Haplorrhini</taxon>
        <taxon>Catarrhini</taxon>
        <taxon>Hominidae</taxon>
        <taxon>Pongo</taxon>
    </lineage>
</organism>
<comment type="function">
    <text evidence="1">Associates with the organic matrix of bone and cartilage. Thought to act as an inhibitor of bone formation (By similarity).</text>
</comment>
<comment type="subcellular location">
    <subcellularLocation>
        <location evidence="1">Secreted</location>
    </subcellularLocation>
</comment>
<comment type="PTM">
    <text evidence="1">Requires vitamin K-dependent gamma-carboxylation for its function.</text>
</comment>
<comment type="similarity">
    <text evidence="4">Belongs to the osteocalcin/matrix Gla protein family.</text>
</comment>